<evidence type="ECO:0000250" key="1"/>
<evidence type="ECO:0000250" key="2">
    <source>
        <dbReference type="UniProtKB" id="P00157"/>
    </source>
</evidence>
<evidence type="ECO:0000255" key="3">
    <source>
        <dbReference type="PROSITE-ProRule" id="PRU00967"/>
    </source>
</evidence>
<evidence type="ECO:0000255" key="4">
    <source>
        <dbReference type="PROSITE-ProRule" id="PRU00968"/>
    </source>
</evidence>
<dbReference type="EMBL" id="D32192">
    <property type="protein sequence ID" value="BAA06891.1"/>
    <property type="molecule type" value="Genomic_DNA"/>
</dbReference>
<dbReference type="SMR" id="Q34172"/>
<dbReference type="GO" id="GO:0005743">
    <property type="term" value="C:mitochondrial inner membrane"/>
    <property type="evidence" value="ECO:0007669"/>
    <property type="project" value="UniProtKB-SubCell"/>
</dbReference>
<dbReference type="GO" id="GO:0045275">
    <property type="term" value="C:respiratory chain complex III"/>
    <property type="evidence" value="ECO:0007669"/>
    <property type="project" value="InterPro"/>
</dbReference>
<dbReference type="GO" id="GO:0046872">
    <property type="term" value="F:metal ion binding"/>
    <property type="evidence" value="ECO:0007669"/>
    <property type="project" value="UniProtKB-KW"/>
</dbReference>
<dbReference type="GO" id="GO:0008121">
    <property type="term" value="F:ubiquinol-cytochrome-c reductase activity"/>
    <property type="evidence" value="ECO:0007669"/>
    <property type="project" value="InterPro"/>
</dbReference>
<dbReference type="GO" id="GO:0006122">
    <property type="term" value="P:mitochondrial electron transport, ubiquinol to cytochrome c"/>
    <property type="evidence" value="ECO:0007669"/>
    <property type="project" value="TreeGrafter"/>
</dbReference>
<dbReference type="CDD" id="cd00290">
    <property type="entry name" value="cytochrome_b_C"/>
    <property type="match status" value="1"/>
</dbReference>
<dbReference type="CDD" id="cd00284">
    <property type="entry name" value="Cytochrome_b_N"/>
    <property type="match status" value="1"/>
</dbReference>
<dbReference type="FunFam" id="1.20.810.10:FF:000002">
    <property type="entry name" value="Cytochrome b"/>
    <property type="match status" value="1"/>
</dbReference>
<dbReference type="Gene3D" id="1.20.810.10">
    <property type="entry name" value="Cytochrome Bc1 Complex, Chain C"/>
    <property type="match status" value="1"/>
</dbReference>
<dbReference type="InterPro" id="IPR005798">
    <property type="entry name" value="Cyt_b/b6_C"/>
</dbReference>
<dbReference type="InterPro" id="IPR036150">
    <property type="entry name" value="Cyt_b/b6_C_sf"/>
</dbReference>
<dbReference type="InterPro" id="IPR005797">
    <property type="entry name" value="Cyt_b/b6_N"/>
</dbReference>
<dbReference type="InterPro" id="IPR027387">
    <property type="entry name" value="Cytb/b6-like_sf"/>
</dbReference>
<dbReference type="InterPro" id="IPR030689">
    <property type="entry name" value="Cytochrome_b"/>
</dbReference>
<dbReference type="InterPro" id="IPR048260">
    <property type="entry name" value="Cytochrome_b_C_euk/bac"/>
</dbReference>
<dbReference type="InterPro" id="IPR048259">
    <property type="entry name" value="Cytochrome_b_N_euk/bac"/>
</dbReference>
<dbReference type="InterPro" id="IPR016174">
    <property type="entry name" value="Di-haem_cyt_TM"/>
</dbReference>
<dbReference type="PANTHER" id="PTHR19271">
    <property type="entry name" value="CYTOCHROME B"/>
    <property type="match status" value="1"/>
</dbReference>
<dbReference type="PANTHER" id="PTHR19271:SF16">
    <property type="entry name" value="CYTOCHROME B"/>
    <property type="match status" value="1"/>
</dbReference>
<dbReference type="Pfam" id="PF00032">
    <property type="entry name" value="Cytochrom_B_C"/>
    <property type="match status" value="1"/>
</dbReference>
<dbReference type="Pfam" id="PF00033">
    <property type="entry name" value="Cytochrome_B"/>
    <property type="match status" value="1"/>
</dbReference>
<dbReference type="PIRSF" id="PIRSF038885">
    <property type="entry name" value="COB"/>
    <property type="match status" value="1"/>
</dbReference>
<dbReference type="SUPFAM" id="SSF81648">
    <property type="entry name" value="a domain/subunit of cytochrome bc1 complex (Ubiquinol-cytochrome c reductase)"/>
    <property type="match status" value="1"/>
</dbReference>
<dbReference type="SUPFAM" id="SSF81342">
    <property type="entry name" value="Transmembrane di-heme cytochromes"/>
    <property type="match status" value="1"/>
</dbReference>
<dbReference type="PROSITE" id="PS51003">
    <property type="entry name" value="CYTB_CTER"/>
    <property type="match status" value="1"/>
</dbReference>
<dbReference type="PROSITE" id="PS51002">
    <property type="entry name" value="CYTB_NTER"/>
    <property type="match status" value="1"/>
</dbReference>
<comment type="function">
    <text evidence="2">Component of the ubiquinol-cytochrome c reductase complex (complex III or cytochrome b-c1 complex) that is part of the mitochondrial respiratory chain. The b-c1 complex mediates electron transfer from ubiquinol to cytochrome c. Contributes to the generation of a proton gradient across the mitochondrial membrane that is then used for ATP synthesis.</text>
</comment>
<comment type="cofactor">
    <cofactor evidence="2">
        <name>heme b</name>
        <dbReference type="ChEBI" id="CHEBI:60344"/>
    </cofactor>
    <text evidence="2">Binds 2 heme b groups non-covalently.</text>
</comment>
<comment type="subunit">
    <text evidence="2">The cytochrome bc1 complex contains 11 subunits: 3 respiratory subunits (MT-CYB, CYC1 and UQCRFS1), 2 core proteins (UQCRC1 and UQCRC2) and 6 low-molecular weight proteins (UQCRH/QCR6, UQCRB/QCR7, UQCRQ/QCR8, UQCR10/QCR9, UQCR11/QCR10 and a cleavage product of UQCRFS1). This cytochrome bc1 complex then forms a dimer.</text>
</comment>
<comment type="subcellular location">
    <subcellularLocation>
        <location evidence="2">Mitochondrion inner membrane</location>
        <topology evidence="2">Multi-pass membrane protein</topology>
    </subcellularLocation>
</comment>
<comment type="miscellaneous">
    <text evidence="1">Heme 1 (or BL or b562) is low-potential and absorbs at about 562 nm, and heme 2 (or BH or b566) is high-potential and absorbs at about 566 nm.</text>
</comment>
<comment type="similarity">
    <text evidence="3 4">Belongs to the cytochrome b family.</text>
</comment>
<comment type="caution">
    <text evidence="2">The full-length protein contains only eight transmembrane helices, not nine as predicted by bioinformatics tools.</text>
</comment>
<proteinExistence type="inferred from homology"/>
<organism>
    <name type="scientific">Cervus nippon</name>
    <name type="common">Sika deer</name>
    <dbReference type="NCBI Taxonomy" id="9863"/>
    <lineage>
        <taxon>Eukaryota</taxon>
        <taxon>Metazoa</taxon>
        <taxon>Chordata</taxon>
        <taxon>Craniata</taxon>
        <taxon>Vertebrata</taxon>
        <taxon>Euteleostomi</taxon>
        <taxon>Mammalia</taxon>
        <taxon>Eutheria</taxon>
        <taxon>Laurasiatheria</taxon>
        <taxon>Artiodactyla</taxon>
        <taxon>Ruminantia</taxon>
        <taxon>Pecora</taxon>
        <taxon>Cervidae</taxon>
        <taxon>Cervinae</taxon>
        <taxon>Cervus</taxon>
    </lineage>
</organism>
<gene>
    <name type="primary">MT-CYB</name>
    <name type="synonym">COB</name>
    <name type="synonym">CYTB</name>
    <name type="synonym">MTCYB</name>
</gene>
<reference key="1">
    <citation type="journal article" date="1995" name="J. Mol. Evol.">
        <title>Molecular phylogeny based on the kappa-casein and cytochrome b sequences in the mammalian suborder ruminantia.</title>
        <authorList>
            <person name="Chikuni K."/>
            <person name="Mori Y."/>
            <person name="Tabata T."/>
            <person name="Saito M."/>
            <person name="Monma M."/>
            <person name="Kosugiyama M."/>
        </authorList>
    </citation>
    <scope>NUCLEOTIDE SEQUENCE [GENOMIC DNA]</scope>
    <source>
        <tissue>Muscle</tissue>
    </source>
</reference>
<sequence>MTNIRKTHPLMKIVNNAFIDLPAPSNISSWWNFGSLLGICLILQILTGLFLAMHYTSDTMTAFSSVTHICRDVNYGWIIRYMHANGASMFFICLFMHVGRGLYYGSYTFLETWNIGVILLFTVMATAFVGYVLPWGQMSFWGATVITNLLSAIPYIGTNLVEWIWGGFSVDKATLTRFFAFHFILPFIIAALAMVHLLFLHETGSNNPTGIPSDADKIPFHPYYTIKDILGILLLVLFLMLLVLFAPDLLGDPDNYTPANPLNTPPHIKPEWYFLFAYAILRSIPNKLGGVLALVSSILILILMPLLHTSKQRSMMFRPFSQCLFWILVADLLTLTWIGGQPVEYPFIIIGQLASVLYFFIILVLMPITSTIENNLLKW</sequence>
<name>CYB_CERNI</name>
<protein>
    <recommendedName>
        <fullName>Cytochrome b</fullName>
    </recommendedName>
    <alternativeName>
        <fullName>Complex III subunit 3</fullName>
    </alternativeName>
    <alternativeName>
        <fullName>Complex III subunit III</fullName>
    </alternativeName>
    <alternativeName>
        <fullName>Cytochrome b-c1 complex subunit 3</fullName>
    </alternativeName>
    <alternativeName>
        <fullName>Ubiquinol-cytochrome-c reductase complex cytochrome b subunit</fullName>
    </alternativeName>
</protein>
<geneLocation type="mitochondrion"/>
<keyword id="KW-0249">Electron transport</keyword>
<keyword id="KW-0349">Heme</keyword>
<keyword id="KW-0408">Iron</keyword>
<keyword id="KW-0472">Membrane</keyword>
<keyword id="KW-0479">Metal-binding</keyword>
<keyword id="KW-0496">Mitochondrion</keyword>
<keyword id="KW-0999">Mitochondrion inner membrane</keyword>
<keyword id="KW-0679">Respiratory chain</keyword>
<keyword id="KW-0812">Transmembrane</keyword>
<keyword id="KW-1133">Transmembrane helix</keyword>
<keyword id="KW-0813">Transport</keyword>
<keyword id="KW-0830">Ubiquinone</keyword>
<accession>Q34172</accession>
<feature type="chain" id="PRO_0000060762" description="Cytochrome b">
    <location>
        <begin position="1"/>
        <end position="379"/>
    </location>
</feature>
<feature type="transmembrane region" description="Helical" evidence="2">
    <location>
        <begin position="33"/>
        <end position="53"/>
    </location>
</feature>
<feature type="transmembrane region" description="Helical" evidence="2">
    <location>
        <begin position="77"/>
        <end position="98"/>
    </location>
</feature>
<feature type="transmembrane region" description="Helical" evidence="2">
    <location>
        <begin position="113"/>
        <end position="133"/>
    </location>
</feature>
<feature type="transmembrane region" description="Helical" evidence="2">
    <location>
        <begin position="178"/>
        <end position="198"/>
    </location>
</feature>
<feature type="transmembrane region" description="Helical" evidence="2">
    <location>
        <begin position="226"/>
        <end position="246"/>
    </location>
</feature>
<feature type="transmembrane region" description="Helical" evidence="2">
    <location>
        <begin position="288"/>
        <end position="308"/>
    </location>
</feature>
<feature type="transmembrane region" description="Helical" evidence="2">
    <location>
        <begin position="320"/>
        <end position="340"/>
    </location>
</feature>
<feature type="transmembrane region" description="Helical" evidence="2">
    <location>
        <begin position="347"/>
        <end position="367"/>
    </location>
</feature>
<feature type="binding site" description="axial binding residue" evidence="2">
    <location>
        <position position="83"/>
    </location>
    <ligand>
        <name>heme b</name>
        <dbReference type="ChEBI" id="CHEBI:60344"/>
        <label>b562</label>
    </ligand>
    <ligandPart>
        <name>Fe</name>
        <dbReference type="ChEBI" id="CHEBI:18248"/>
    </ligandPart>
</feature>
<feature type="binding site" description="axial binding residue" evidence="2">
    <location>
        <position position="97"/>
    </location>
    <ligand>
        <name>heme b</name>
        <dbReference type="ChEBI" id="CHEBI:60344"/>
        <label>b566</label>
    </ligand>
    <ligandPart>
        <name>Fe</name>
        <dbReference type="ChEBI" id="CHEBI:18248"/>
    </ligandPart>
</feature>
<feature type="binding site" description="axial binding residue" evidence="2">
    <location>
        <position position="182"/>
    </location>
    <ligand>
        <name>heme b</name>
        <dbReference type="ChEBI" id="CHEBI:60344"/>
        <label>b562</label>
    </ligand>
    <ligandPart>
        <name>Fe</name>
        <dbReference type="ChEBI" id="CHEBI:18248"/>
    </ligandPart>
</feature>
<feature type="binding site" description="axial binding residue" evidence="2">
    <location>
        <position position="196"/>
    </location>
    <ligand>
        <name>heme b</name>
        <dbReference type="ChEBI" id="CHEBI:60344"/>
        <label>b566</label>
    </ligand>
    <ligandPart>
        <name>Fe</name>
        <dbReference type="ChEBI" id="CHEBI:18248"/>
    </ligandPart>
</feature>
<feature type="binding site" evidence="2">
    <location>
        <position position="201"/>
    </location>
    <ligand>
        <name>a ubiquinone</name>
        <dbReference type="ChEBI" id="CHEBI:16389"/>
    </ligand>
</feature>